<sequence>MERAIFAGGCFWCMVQPFEEQAGILSVRSGYTGGHLPNPSYEQVCAKTTGHTEAVEIIFDPKQIAYKDLVELYWAQTDPTDAFGQFEDRGDNYRPVIYYTTERQKEIAEQSKANLQASGRFDQPIVTTIEPAEPFYLAEDYHQGFYKKNPKRYAQSSAIRHQFLEENWS</sequence>
<name>MSRA_STRPB</name>
<proteinExistence type="inferred from homology"/>
<accession>Q1JD56</accession>
<organism>
    <name type="scientific">Streptococcus pyogenes serotype M12 (strain MGAS2096)</name>
    <dbReference type="NCBI Taxonomy" id="370553"/>
    <lineage>
        <taxon>Bacteria</taxon>
        <taxon>Bacillati</taxon>
        <taxon>Bacillota</taxon>
        <taxon>Bacilli</taxon>
        <taxon>Lactobacillales</taxon>
        <taxon>Streptococcaceae</taxon>
        <taxon>Streptococcus</taxon>
    </lineage>
</organism>
<protein>
    <recommendedName>
        <fullName evidence="1">Peptide methionine sulfoxide reductase MsrA</fullName>
        <shortName evidence="1">Protein-methionine-S-oxide reductase</shortName>
        <ecNumber evidence="1">1.8.4.11</ecNumber>
    </recommendedName>
    <alternativeName>
        <fullName evidence="1">Peptide-methionine (S)-S-oxide reductase</fullName>
        <shortName evidence="1">Peptide Met(O) reductase</shortName>
    </alternativeName>
</protein>
<comment type="function">
    <text evidence="1">Has an important function as a repair enzyme for proteins that have been inactivated by oxidation. Catalyzes the reversible oxidation-reduction of methionine sulfoxide in proteins to methionine.</text>
</comment>
<comment type="catalytic activity">
    <reaction evidence="1">
        <text>L-methionyl-[protein] + [thioredoxin]-disulfide + H2O = L-methionyl-(S)-S-oxide-[protein] + [thioredoxin]-dithiol</text>
        <dbReference type="Rhea" id="RHEA:14217"/>
        <dbReference type="Rhea" id="RHEA-COMP:10698"/>
        <dbReference type="Rhea" id="RHEA-COMP:10700"/>
        <dbReference type="Rhea" id="RHEA-COMP:12313"/>
        <dbReference type="Rhea" id="RHEA-COMP:12315"/>
        <dbReference type="ChEBI" id="CHEBI:15377"/>
        <dbReference type="ChEBI" id="CHEBI:16044"/>
        <dbReference type="ChEBI" id="CHEBI:29950"/>
        <dbReference type="ChEBI" id="CHEBI:44120"/>
        <dbReference type="ChEBI" id="CHEBI:50058"/>
        <dbReference type="EC" id="1.8.4.11"/>
    </reaction>
</comment>
<comment type="catalytic activity">
    <reaction evidence="1">
        <text>[thioredoxin]-disulfide + L-methionine + H2O = L-methionine (S)-S-oxide + [thioredoxin]-dithiol</text>
        <dbReference type="Rhea" id="RHEA:19993"/>
        <dbReference type="Rhea" id="RHEA-COMP:10698"/>
        <dbReference type="Rhea" id="RHEA-COMP:10700"/>
        <dbReference type="ChEBI" id="CHEBI:15377"/>
        <dbReference type="ChEBI" id="CHEBI:29950"/>
        <dbReference type="ChEBI" id="CHEBI:50058"/>
        <dbReference type="ChEBI" id="CHEBI:57844"/>
        <dbReference type="ChEBI" id="CHEBI:58772"/>
        <dbReference type="EC" id="1.8.4.11"/>
    </reaction>
</comment>
<comment type="similarity">
    <text evidence="1">Belongs to the MsrA Met sulfoxide reductase family.</text>
</comment>
<gene>
    <name evidence="1" type="primary">msrA</name>
    <name type="ordered locus">MGAS2096_Spy0400</name>
</gene>
<feature type="chain" id="PRO_1000068365" description="Peptide methionine sulfoxide reductase MsrA">
    <location>
        <begin position="1"/>
        <end position="169"/>
    </location>
</feature>
<feature type="active site" evidence="1">
    <location>
        <position position="10"/>
    </location>
</feature>
<dbReference type="EC" id="1.8.4.11" evidence="1"/>
<dbReference type="EMBL" id="CP000261">
    <property type="protein sequence ID" value="ABF35452.1"/>
    <property type="molecule type" value="Genomic_DNA"/>
</dbReference>
<dbReference type="SMR" id="Q1JD56"/>
<dbReference type="KEGG" id="spj:MGAS2096_Spy0400"/>
<dbReference type="HOGENOM" id="CLU_031040_10_1_9"/>
<dbReference type="GO" id="GO:0033744">
    <property type="term" value="F:L-methionine:thioredoxin-disulfide S-oxidoreductase activity"/>
    <property type="evidence" value="ECO:0007669"/>
    <property type="project" value="RHEA"/>
</dbReference>
<dbReference type="GO" id="GO:0008113">
    <property type="term" value="F:peptide-methionine (S)-S-oxide reductase activity"/>
    <property type="evidence" value="ECO:0007669"/>
    <property type="project" value="UniProtKB-UniRule"/>
</dbReference>
<dbReference type="GO" id="GO:0036211">
    <property type="term" value="P:protein modification process"/>
    <property type="evidence" value="ECO:0007669"/>
    <property type="project" value="UniProtKB-UniRule"/>
</dbReference>
<dbReference type="Gene3D" id="3.30.1060.10">
    <property type="entry name" value="Peptide methionine sulphoxide reductase MsrA"/>
    <property type="match status" value="1"/>
</dbReference>
<dbReference type="HAMAP" id="MF_01401">
    <property type="entry name" value="MsrA"/>
    <property type="match status" value="1"/>
</dbReference>
<dbReference type="InterPro" id="IPR002569">
    <property type="entry name" value="Met_Sox_Rdtase_MsrA_dom"/>
</dbReference>
<dbReference type="InterPro" id="IPR036509">
    <property type="entry name" value="Met_Sox_Rdtase_MsrA_sf"/>
</dbReference>
<dbReference type="NCBIfam" id="TIGR00401">
    <property type="entry name" value="msrA"/>
    <property type="match status" value="1"/>
</dbReference>
<dbReference type="PANTHER" id="PTHR43774">
    <property type="entry name" value="PEPTIDE METHIONINE SULFOXIDE REDUCTASE"/>
    <property type="match status" value="1"/>
</dbReference>
<dbReference type="PANTHER" id="PTHR43774:SF1">
    <property type="entry name" value="PEPTIDE METHIONINE SULFOXIDE REDUCTASE MSRA 2"/>
    <property type="match status" value="1"/>
</dbReference>
<dbReference type="Pfam" id="PF01625">
    <property type="entry name" value="PMSR"/>
    <property type="match status" value="1"/>
</dbReference>
<dbReference type="SUPFAM" id="SSF55068">
    <property type="entry name" value="Peptide methionine sulfoxide reductase"/>
    <property type="match status" value="1"/>
</dbReference>
<keyword id="KW-0560">Oxidoreductase</keyword>
<evidence type="ECO:0000255" key="1">
    <source>
        <dbReference type="HAMAP-Rule" id="MF_01401"/>
    </source>
</evidence>
<reference key="1">
    <citation type="journal article" date="2006" name="Proc. Natl. Acad. Sci. U.S.A.">
        <title>Molecular genetic anatomy of inter- and intraserotype variation in the human bacterial pathogen group A Streptococcus.</title>
        <authorList>
            <person name="Beres S.B."/>
            <person name="Richter E.W."/>
            <person name="Nagiec M.J."/>
            <person name="Sumby P."/>
            <person name="Porcella S.F."/>
            <person name="DeLeo F.R."/>
            <person name="Musser J.M."/>
        </authorList>
    </citation>
    <scope>NUCLEOTIDE SEQUENCE [LARGE SCALE GENOMIC DNA]</scope>
    <source>
        <strain>MGAS2096</strain>
    </source>
</reference>